<evidence type="ECO:0000250" key="1"/>
<evidence type="ECO:0000250" key="2">
    <source>
        <dbReference type="UniProtKB" id="Q8BLE7"/>
    </source>
</evidence>
<evidence type="ECO:0000250" key="3">
    <source>
        <dbReference type="UniProtKB" id="Q9JI12"/>
    </source>
</evidence>
<evidence type="ECO:0000255" key="4"/>
<evidence type="ECO:0000269" key="5">
    <source>
    </source>
</evidence>
<evidence type="ECO:0000269" key="6">
    <source>
    </source>
</evidence>
<evidence type="ECO:0000305" key="7"/>
<dbReference type="EMBL" id="AB183387">
    <property type="protein sequence ID" value="BAD67438.1"/>
    <property type="molecule type" value="mRNA"/>
</dbReference>
<dbReference type="RefSeq" id="NP_001009982.1">
    <property type="nucleotide sequence ID" value="NM_001009982.1"/>
</dbReference>
<dbReference type="SMR" id="Q5W8I7"/>
<dbReference type="FunCoup" id="Q5W8I7">
    <property type="interactions" value="338"/>
</dbReference>
<dbReference type="STRING" id="7955.ENSDARP00000011755"/>
<dbReference type="GlyCosmos" id="Q5W8I7">
    <property type="glycosylation" value="3 sites, No reported glycans"/>
</dbReference>
<dbReference type="PaxDb" id="7955-ENSDARP00000011755"/>
<dbReference type="GeneID" id="494492"/>
<dbReference type="KEGG" id="dre:494492"/>
<dbReference type="AGR" id="ZFIN:ZDB-GENE-050105-4"/>
<dbReference type="CTD" id="494492"/>
<dbReference type="ZFIN" id="ZDB-GENE-050105-4">
    <property type="gene designation" value="slc17a6a"/>
</dbReference>
<dbReference type="eggNOG" id="KOG2532">
    <property type="taxonomic scope" value="Eukaryota"/>
</dbReference>
<dbReference type="InParanoid" id="Q5W8I7"/>
<dbReference type="OrthoDB" id="2985014at2759"/>
<dbReference type="PhylomeDB" id="Q5W8I7"/>
<dbReference type="PRO" id="PR:Q5W8I7"/>
<dbReference type="Proteomes" id="UP000000437">
    <property type="component" value="Chromosome 25"/>
</dbReference>
<dbReference type="GO" id="GO:0034707">
    <property type="term" value="C:chloride channel complex"/>
    <property type="evidence" value="ECO:0007669"/>
    <property type="project" value="UniProtKB-KW"/>
</dbReference>
<dbReference type="GO" id="GO:0060076">
    <property type="term" value="C:excitatory synapse"/>
    <property type="evidence" value="ECO:0000318"/>
    <property type="project" value="GO_Central"/>
</dbReference>
<dbReference type="GO" id="GO:0043005">
    <property type="term" value="C:neuron projection"/>
    <property type="evidence" value="ECO:0000250"/>
    <property type="project" value="UniProtKB"/>
</dbReference>
<dbReference type="GO" id="GO:0005886">
    <property type="term" value="C:plasma membrane"/>
    <property type="evidence" value="ECO:0007669"/>
    <property type="project" value="UniProtKB-SubCell"/>
</dbReference>
<dbReference type="GO" id="GO:0008021">
    <property type="term" value="C:synaptic vesicle"/>
    <property type="evidence" value="ECO:0000250"/>
    <property type="project" value="UniProtKB"/>
</dbReference>
<dbReference type="GO" id="GO:0030672">
    <property type="term" value="C:synaptic vesicle membrane"/>
    <property type="evidence" value="ECO:0000250"/>
    <property type="project" value="UniProtKB"/>
</dbReference>
<dbReference type="GO" id="GO:0005254">
    <property type="term" value="F:chloride channel activity"/>
    <property type="evidence" value="ECO:0000250"/>
    <property type="project" value="UniProtKB"/>
</dbReference>
<dbReference type="GO" id="GO:0005313">
    <property type="term" value="F:L-glutamate transmembrane transporter activity"/>
    <property type="evidence" value="ECO:0000318"/>
    <property type="project" value="GO_Central"/>
</dbReference>
<dbReference type="GO" id="GO:0140788">
    <property type="term" value="F:L-glutamate uniporter activity"/>
    <property type="evidence" value="ECO:0000250"/>
    <property type="project" value="UniProtKB"/>
</dbReference>
<dbReference type="GO" id="GO:0005326">
    <property type="term" value="F:neurotransmitter transmembrane transporter activity"/>
    <property type="evidence" value="ECO:0000318"/>
    <property type="project" value="GO_Central"/>
</dbReference>
<dbReference type="GO" id="GO:0015386">
    <property type="term" value="F:potassium:proton antiporter activity"/>
    <property type="evidence" value="ECO:0000250"/>
    <property type="project" value="UniProtKB"/>
</dbReference>
<dbReference type="GO" id="GO:0005436">
    <property type="term" value="F:sodium:phosphate symporter activity"/>
    <property type="evidence" value="ECO:0000250"/>
    <property type="project" value="UniProtKB"/>
</dbReference>
<dbReference type="GO" id="GO:0051938">
    <property type="term" value="P:L-glutamate import"/>
    <property type="evidence" value="ECO:0000250"/>
    <property type="project" value="UniProtKB"/>
</dbReference>
<dbReference type="GO" id="GO:0015813">
    <property type="term" value="P:L-glutamate transmembrane transport"/>
    <property type="evidence" value="ECO:0000250"/>
    <property type="project" value="UniProtKB"/>
</dbReference>
<dbReference type="GO" id="GO:0098700">
    <property type="term" value="P:neurotransmitter loading into synaptic vesicle"/>
    <property type="evidence" value="ECO:0000318"/>
    <property type="project" value="GO_Central"/>
</dbReference>
<dbReference type="GO" id="GO:0055062">
    <property type="term" value="P:phosphate ion homeostasis"/>
    <property type="evidence" value="ECO:0000250"/>
    <property type="project" value="UniProtKB"/>
</dbReference>
<dbReference type="GO" id="GO:0006817">
    <property type="term" value="P:phosphate ion transport"/>
    <property type="evidence" value="ECO:0000250"/>
    <property type="project" value="UniProtKB"/>
</dbReference>
<dbReference type="GO" id="GO:0050803">
    <property type="term" value="P:regulation of synapse structure or activity"/>
    <property type="evidence" value="ECO:0000318"/>
    <property type="project" value="GO_Central"/>
</dbReference>
<dbReference type="GO" id="GO:0044341">
    <property type="term" value="P:sodium-dependent phosphate transport"/>
    <property type="evidence" value="ECO:0000250"/>
    <property type="project" value="UniProtKB"/>
</dbReference>
<dbReference type="GO" id="GO:0035249">
    <property type="term" value="P:synaptic transmission, glutamatergic"/>
    <property type="evidence" value="ECO:0000318"/>
    <property type="project" value="GO_Central"/>
</dbReference>
<dbReference type="CDD" id="cd17382">
    <property type="entry name" value="MFS_SLC17A6_7_8_VGluT"/>
    <property type="match status" value="1"/>
</dbReference>
<dbReference type="FunFam" id="1.20.1250.20:FF:000004">
    <property type="entry name" value="vesicular glutamate transporter 2 isoform X1"/>
    <property type="match status" value="1"/>
</dbReference>
<dbReference type="FunFam" id="1.20.1250.20:FF:000005">
    <property type="entry name" value="vesicular glutamate transporter 2 isoform X1"/>
    <property type="match status" value="1"/>
</dbReference>
<dbReference type="Gene3D" id="1.20.1250.20">
    <property type="entry name" value="MFS general substrate transporter like domains"/>
    <property type="match status" value="2"/>
</dbReference>
<dbReference type="InterPro" id="IPR011701">
    <property type="entry name" value="MFS"/>
</dbReference>
<dbReference type="InterPro" id="IPR020846">
    <property type="entry name" value="MFS_dom"/>
</dbReference>
<dbReference type="InterPro" id="IPR050382">
    <property type="entry name" value="MFS_Na/Anion_cotransporter"/>
</dbReference>
<dbReference type="InterPro" id="IPR036259">
    <property type="entry name" value="MFS_trans_sf"/>
</dbReference>
<dbReference type="PANTHER" id="PTHR11662">
    <property type="entry name" value="SOLUTE CARRIER FAMILY 17"/>
    <property type="match status" value="1"/>
</dbReference>
<dbReference type="PANTHER" id="PTHR11662:SF201">
    <property type="entry name" value="VESICULAR GLUTAMATE TRANSPORTER 2"/>
    <property type="match status" value="1"/>
</dbReference>
<dbReference type="Pfam" id="PF07690">
    <property type="entry name" value="MFS_1"/>
    <property type="match status" value="1"/>
</dbReference>
<dbReference type="SUPFAM" id="SSF103473">
    <property type="entry name" value="MFS general substrate transporter"/>
    <property type="match status" value="1"/>
</dbReference>
<dbReference type="PROSITE" id="PS50850">
    <property type="entry name" value="MFS"/>
    <property type="match status" value="1"/>
</dbReference>
<name>VGL2B_DANRE</name>
<organism>
    <name type="scientific">Danio rerio</name>
    <name type="common">Zebrafish</name>
    <name type="synonym">Brachydanio rerio</name>
    <dbReference type="NCBI Taxonomy" id="7955"/>
    <lineage>
        <taxon>Eukaryota</taxon>
        <taxon>Metazoa</taxon>
        <taxon>Chordata</taxon>
        <taxon>Craniata</taxon>
        <taxon>Vertebrata</taxon>
        <taxon>Euteleostomi</taxon>
        <taxon>Actinopterygii</taxon>
        <taxon>Neopterygii</taxon>
        <taxon>Teleostei</taxon>
        <taxon>Ostariophysi</taxon>
        <taxon>Cypriniformes</taxon>
        <taxon>Danionidae</taxon>
        <taxon>Danioninae</taxon>
        <taxon>Danio</taxon>
    </lineage>
</organism>
<reference key="1">
    <citation type="journal article" date="2004" name="J. Comp. Neurol.">
        <title>Distribution of prospective glutamatergic, glycinergic, and GABAergic neurons in embryonic and larval zebrafish.</title>
        <authorList>
            <person name="Higashijima S."/>
            <person name="Mandel G."/>
            <person name="Fetcho J.R."/>
        </authorList>
    </citation>
    <scope>NUCLEOTIDE SEQUENCE [MRNA]</scope>
    <scope>TISSUE SPECIFICITY</scope>
</reference>
<reference key="2">
    <citation type="journal article" date="2007" name="PLoS Biol.">
        <title>Characterization of sleep in zebrafish and insomnia in hypocretin receptor mutants.</title>
        <authorList>
            <person name="Yokogawa T."/>
            <person name="Marin W."/>
            <person name="Faraco J."/>
            <person name="Pezeron G."/>
            <person name="Appelbaum L."/>
            <person name="Zhang J."/>
            <person name="Rosa F."/>
            <person name="Mourrain P."/>
            <person name="Mignot E."/>
        </authorList>
    </citation>
    <scope>TISSUE SPECIFICITY</scope>
</reference>
<comment type="function">
    <text evidence="2 3">Multifunctional transporter that transports L-glutamate as well as multiple ions such as chloride, proton, potassium, sodium and phosphate. At the synaptic vesicle membrane, mainly functions as a uniporter which transports preferentially L-glutamate but also, phosphate from the cytoplasm into synaptic vesicles at presynaptic nerve terminals of excitatory neural cells. The L-glutamate or phosphate uniporter activity is electrogenic and is driven by the proton electrochemical gradient, mainly by the electrical gradient established by the vacuolar H(+)-ATPase across the synaptic vesicle membrane. In addition, functions as a chloride channel that allows a chloride permeation through the synaptic vesicle membrane therefore affects the proton electrochemical gradient and promotes synaptic vesicles acidification. Moreover, functions as a vesicular K(+)/H(+) antiport allowing to maintain the electrical gradient and to decrease chemical gradient and therefore sustain vesicular L-glutamate uptake. The vesicular H(+)/H(+) antiport activity is electroneutral. At the plasma membrane, following exocytosis, functions as a symporter of Na(+) and phosphate from the extracellular space to the cytoplasm allowing synaptic phosphate homeostasis regulation. The symporter activity is driven by an inside negative membrane potential and is electrogenic (By similarity). Also involved in the regulation of retinal hyaloid vessel regression during postnatal development (By similarity). May also play a role in the endocrine L-glutamatergic system of other tissues such as pineal gland and pancreas (By similarity).</text>
</comment>
<comment type="catalytic activity">
    <reaction evidence="3">
        <text>L-glutamate(out) = L-glutamate(in)</text>
        <dbReference type="Rhea" id="RHEA:66336"/>
        <dbReference type="ChEBI" id="CHEBI:29985"/>
    </reaction>
</comment>
<comment type="catalytic activity">
    <reaction evidence="3">
        <text>3 Na(+)(out) + phosphate(out) = 3 Na(+)(in) + phosphate(in)</text>
        <dbReference type="Rhea" id="RHEA:71255"/>
        <dbReference type="ChEBI" id="CHEBI:29101"/>
        <dbReference type="ChEBI" id="CHEBI:43474"/>
    </reaction>
</comment>
<comment type="catalytic activity">
    <reaction evidence="3">
        <text>phosphate(in) = phosphate(out)</text>
        <dbReference type="Rhea" id="RHEA:32823"/>
        <dbReference type="ChEBI" id="CHEBI:43474"/>
    </reaction>
</comment>
<comment type="catalytic activity">
    <reaction evidence="3">
        <text>K(+)(in) + H(+)(out) = K(+)(out) + H(+)(in)</text>
        <dbReference type="Rhea" id="RHEA:29467"/>
        <dbReference type="ChEBI" id="CHEBI:15378"/>
        <dbReference type="ChEBI" id="CHEBI:29103"/>
    </reaction>
</comment>
<comment type="catalytic activity">
    <reaction evidence="3">
        <text>chloride(in) = chloride(out)</text>
        <dbReference type="Rhea" id="RHEA:29823"/>
        <dbReference type="ChEBI" id="CHEBI:17996"/>
    </reaction>
</comment>
<comment type="activity regulation">
    <text evidence="3">Chloride channel activity is allosterically activated by lumenal H(+) and Cl(-) leading to synaptic vesicles acidification. The L-glutamate transport activity is allosterically activated by lumenal H(+) and Cl(-). The allosteric requirement for H(+) efficiently prevents non-vesicular efflux across the plasma membrane. The L-glutamate uniporter activity exhibits a biphasic dependence on chloride concentration.</text>
</comment>
<comment type="subcellular location">
    <subcellularLocation>
        <location evidence="1">Cytoplasmic vesicle</location>
        <location evidence="1">Secretory vesicle</location>
        <location evidence="1">Synaptic vesicle membrane</location>
    </subcellularLocation>
    <subcellularLocation>
        <location evidence="7">Membrane</location>
        <topology evidence="7">Multi-pass membrane protein</topology>
    </subcellularLocation>
    <subcellularLocation>
        <location evidence="1">Synapse</location>
        <location evidence="1">Synaptosome</location>
    </subcellularLocation>
    <subcellularLocation>
        <location evidence="2">Cell membrane</location>
        <topology evidence="4">Multi-pass membrane protein</topology>
    </subcellularLocation>
</comment>
<comment type="tissue specificity">
    <text evidence="5 6">Expressed in spinal cord.</text>
</comment>
<comment type="similarity">
    <text evidence="7">Belongs to the major facilitator superfamily. Sodium/anion cotransporter family. VGLUT subfamily.</text>
</comment>
<accession>Q5W8I7</accession>
<feature type="chain" id="PRO_0000318173" description="Vesicular glutamate transporter 2.2">
    <location>
        <begin position="1"/>
        <end position="587"/>
    </location>
</feature>
<feature type="topological domain" description="Cytoplasmic" evidence="4">
    <location>
        <begin position="1"/>
        <end position="71"/>
    </location>
</feature>
<feature type="transmembrane region" description="Helical" evidence="4">
    <location>
        <begin position="72"/>
        <end position="92"/>
    </location>
</feature>
<feature type="topological domain" description="Vesicular" evidence="4">
    <location>
        <begin position="93"/>
        <end position="125"/>
    </location>
</feature>
<feature type="transmembrane region" description="Helical" evidence="4">
    <location>
        <begin position="126"/>
        <end position="146"/>
    </location>
</feature>
<feature type="topological domain" description="Cytoplasmic" evidence="4">
    <location>
        <begin position="147"/>
        <end position="149"/>
    </location>
</feature>
<feature type="transmembrane region" description="Helical" evidence="4">
    <location>
        <begin position="150"/>
        <end position="170"/>
    </location>
</feature>
<feature type="topological domain" description="Vesicular" evidence="4">
    <location>
        <begin position="171"/>
        <end position="180"/>
    </location>
</feature>
<feature type="transmembrane region" description="Helical" evidence="4">
    <location>
        <begin position="181"/>
        <end position="203"/>
    </location>
</feature>
<feature type="topological domain" description="Cytoplasmic" evidence="4">
    <location>
        <begin position="204"/>
        <end position="217"/>
    </location>
</feature>
<feature type="transmembrane region" description="Helical" evidence="4">
    <location>
        <begin position="218"/>
        <end position="238"/>
    </location>
</feature>
<feature type="topological domain" description="Vesicular" evidence="4">
    <location>
        <begin position="239"/>
        <end position="245"/>
    </location>
</feature>
<feature type="transmembrane region" description="Helical" evidence="4">
    <location>
        <begin position="246"/>
        <end position="266"/>
    </location>
</feature>
<feature type="topological domain" description="Cytoplasmic" evidence="4">
    <location>
        <begin position="267"/>
        <end position="311"/>
    </location>
</feature>
<feature type="transmembrane region" description="Helical" evidence="4">
    <location>
        <begin position="312"/>
        <end position="332"/>
    </location>
</feature>
<feature type="topological domain" description="Vesicular" evidence="4">
    <location>
        <begin position="333"/>
        <end position="350"/>
    </location>
</feature>
<feature type="transmembrane region" description="Helical" evidence="4">
    <location>
        <begin position="351"/>
        <end position="371"/>
    </location>
</feature>
<feature type="topological domain" description="Cytoplasmic" evidence="4">
    <location>
        <begin position="372"/>
        <end position="387"/>
    </location>
</feature>
<feature type="transmembrane region" description="Helical" evidence="4">
    <location>
        <begin position="388"/>
        <end position="408"/>
    </location>
</feature>
<feature type="topological domain" description="Vesicular" evidence="4">
    <location>
        <begin position="409"/>
        <end position="410"/>
    </location>
</feature>
<feature type="transmembrane region" description="Helical" evidence="4">
    <location>
        <begin position="411"/>
        <end position="431"/>
    </location>
</feature>
<feature type="topological domain" description="Cytoplasmic" evidence="4">
    <location>
        <begin position="432"/>
        <end position="444"/>
    </location>
</feature>
<feature type="transmembrane region" description="Helical" evidence="4">
    <location>
        <begin position="445"/>
        <end position="465"/>
    </location>
</feature>
<feature type="topological domain" description="Vesicular" evidence="4">
    <location>
        <begin position="466"/>
        <end position="479"/>
    </location>
</feature>
<feature type="transmembrane region" description="Helical" evidence="4">
    <location>
        <begin position="480"/>
        <end position="500"/>
    </location>
</feature>
<feature type="topological domain" description="Cytoplasmic" evidence="4">
    <location>
        <begin position="501"/>
        <end position="587"/>
    </location>
</feature>
<feature type="glycosylation site" description="N-linked (GlcNAc...) asparagine" evidence="4">
    <location>
        <position position="100"/>
    </location>
</feature>
<feature type="glycosylation site" description="N-linked (GlcNAc...) asparagine" evidence="4">
    <location>
        <position position="101"/>
    </location>
</feature>
<feature type="glycosylation site" description="N-linked (GlcNAc...) asparagine" evidence="4">
    <location>
        <position position="471"/>
    </location>
</feature>
<keyword id="KW-0050">Antiport</keyword>
<keyword id="KW-1003">Cell membrane</keyword>
<keyword id="KW-0868">Chloride</keyword>
<keyword id="KW-0869">Chloride channel</keyword>
<keyword id="KW-0968">Cytoplasmic vesicle</keyword>
<keyword id="KW-0325">Glycoprotein</keyword>
<keyword id="KW-0407">Ion channel</keyword>
<keyword id="KW-0406">Ion transport</keyword>
<keyword id="KW-0472">Membrane</keyword>
<keyword id="KW-0532">Neurotransmitter transport</keyword>
<keyword id="KW-0592">Phosphate transport</keyword>
<keyword id="KW-1185">Reference proteome</keyword>
<keyword id="KW-0915">Sodium</keyword>
<keyword id="KW-0739">Sodium transport</keyword>
<keyword id="KW-0769">Symport</keyword>
<keyword id="KW-0770">Synapse</keyword>
<keyword id="KW-0771">Synaptosome</keyword>
<keyword id="KW-0812">Transmembrane</keyword>
<keyword id="KW-1133">Transmembrane helix</keyword>
<keyword id="KW-0813">Transport</keyword>
<proteinExistence type="evidence at transcript level"/>
<gene>
    <name type="primary">slc17a6a</name>
    <name type="synonym">slc17a6l</name>
    <name type="synonym">vglut2.2</name>
    <name type="synonym">vglut2b</name>
</gene>
<sequence length="587" mass="64461">MDTVKERVLAPGKEKMRNLAGKTLGHMHRVMERKQKTGEVIELTEDGRPMHMPEKKAPLVDCTCFGLPRRYIIAIMSGLGFCISFGIRCNLGVAIVDMVNNSTIHKGGKIIIKGKAKFNWDPETVGMIHGSFFWGYTVTQIPGGYISSRLAANRVFGAAILLTSTLNMFIPSAARVHYGCVMFVRILQGLVEGVTYPACHGIWSKWAPPLERSRLATTSFCGSYAGAVVAMPLAGILVQYSGWSSVFYIYGSFGIVWYMFWILVSYESPADHPTITDEERTYIEESIGESAKLLGAMEKYKTPWRKFFTSMPVYAIIVANFCRSWTFYLLLISQPAYFEEVFGFEISKVGMVSALPHLVMTIIVPIGGQLADYLRSKNILTTTTVRKIMNCGGFGMEATLLLVVGFSHSKGVAISFLVLAVGFSGFAISGFNVNHLDIAPRYASILMGISNGVGTLSGMVCPLIVGAMTKNKTREEWQNVFLIASLVHYGGVIFYGIFASGEKQPWADPEETSDEKCGFIDEDELAEETGDITLSHAPFGAQGALGAPAKTYGATTQLNGGWAKGWEKTEEFIQEDAERTYTGDGYS</sequence>
<protein>
    <recommendedName>
        <fullName evidence="7">Vesicular glutamate transporter 2.2</fullName>
    </recommendedName>
    <alternativeName>
        <fullName>Solute carrier family 17 member 6-A</fullName>
    </alternativeName>
    <alternativeName>
        <fullName>Vesicular glutamate transporter 2-B</fullName>
    </alternativeName>
</protein>